<keyword id="KW-1015">Disulfide bond</keyword>
<keyword id="KW-0244">Early protein</keyword>
<keyword id="KW-0325">Glycoprotein</keyword>
<keyword id="KW-0945">Host-virus interaction</keyword>
<keyword id="KW-0393">Immunoglobulin domain</keyword>
<keyword id="KW-0677">Repeat</keyword>
<keyword id="KW-0964">Secreted</keyword>
<keyword id="KW-0732">Signal</keyword>
<keyword id="KW-0899">Viral immunoevasion</keyword>
<protein>
    <recommendedName>
        <fullName>Interleukin-1-binding protein</fullName>
    </recommendedName>
    <alternativeName>
        <fullName>Protein B15</fullName>
    </alternativeName>
</protein>
<name>IL1BP_CWPXB</name>
<gene>
    <name type="primary">OPG201</name>
    <name type="ordered locus">CPXV209</name>
    <name type="ORF">B15R</name>
</gene>
<dbReference type="EMBL" id="M95202">
    <property type="protein sequence ID" value="AAA85776.1"/>
    <property type="molecule type" value="Genomic_DNA"/>
</dbReference>
<dbReference type="EMBL" id="AF482758">
    <property type="protein sequence ID" value="AAM13648.1"/>
    <property type="molecule type" value="Genomic_DNA"/>
</dbReference>
<dbReference type="SMR" id="Q04523"/>
<dbReference type="KEGG" id="vg:1486088"/>
<dbReference type="Proteomes" id="UP000152733">
    <property type="component" value="Segment"/>
</dbReference>
<dbReference type="GO" id="GO:0005576">
    <property type="term" value="C:extracellular region"/>
    <property type="evidence" value="ECO:0007669"/>
    <property type="project" value="UniProtKB-SubCell"/>
</dbReference>
<dbReference type="GO" id="GO:0019966">
    <property type="term" value="F:interleukin-1 binding"/>
    <property type="evidence" value="ECO:0007669"/>
    <property type="project" value="InterPro"/>
</dbReference>
<dbReference type="GO" id="GO:0004908">
    <property type="term" value="F:interleukin-1 receptor activity"/>
    <property type="evidence" value="ECO:0007669"/>
    <property type="project" value="InterPro"/>
</dbReference>
<dbReference type="GO" id="GO:0044003">
    <property type="term" value="P:symbiont-mediated perturbation of host process"/>
    <property type="evidence" value="ECO:0007669"/>
    <property type="project" value="InterPro"/>
</dbReference>
<dbReference type="FunFam" id="2.60.40.10:FF:000188">
    <property type="entry name" value="Interleukin-1 receptor accessory protein-like 1"/>
    <property type="match status" value="1"/>
</dbReference>
<dbReference type="Gene3D" id="2.60.40.10">
    <property type="entry name" value="Immunoglobulins"/>
    <property type="match status" value="3"/>
</dbReference>
<dbReference type="InterPro" id="IPR007110">
    <property type="entry name" value="Ig-like_dom"/>
</dbReference>
<dbReference type="InterPro" id="IPR036179">
    <property type="entry name" value="Ig-like_dom_sf"/>
</dbReference>
<dbReference type="InterPro" id="IPR013783">
    <property type="entry name" value="Ig-like_fold"/>
</dbReference>
<dbReference type="InterPro" id="IPR003599">
    <property type="entry name" value="Ig_sub"/>
</dbReference>
<dbReference type="InterPro" id="IPR003598">
    <property type="entry name" value="Ig_sub2"/>
</dbReference>
<dbReference type="InterPro" id="IPR004078">
    <property type="entry name" value="IL-1-bd"/>
</dbReference>
<dbReference type="InterPro" id="IPR015621">
    <property type="entry name" value="IL-1_rcpt_fam"/>
</dbReference>
<dbReference type="InterPro" id="IPR004074">
    <property type="entry name" value="IL-1_rcpt_I/II-typ"/>
</dbReference>
<dbReference type="InterPro" id="IPR013151">
    <property type="entry name" value="Immunoglobulin_dom"/>
</dbReference>
<dbReference type="PANTHER" id="PTHR11890">
    <property type="entry name" value="INTERLEUKIN-1 RECEPTOR FAMILY MEMBER"/>
    <property type="match status" value="1"/>
</dbReference>
<dbReference type="PANTHER" id="PTHR11890:SF3">
    <property type="entry name" value="INTERLEUKIN-1 RECEPTOR TYPE 2"/>
    <property type="match status" value="1"/>
</dbReference>
<dbReference type="Pfam" id="PF00047">
    <property type="entry name" value="ig"/>
    <property type="match status" value="1"/>
</dbReference>
<dbReference type="PRINTS" id="PR01540">
    <property type="entry name" value="INTRLEUKN1BP"/>
</dbReference>
<dbReference type="PRINTS" id="PR01536">
    <property type="entry name" value="INTRLKN1R12F"/>
</dbReference>
<dbReference type="SMART" id="SM00409">
    <property type="entry name" value="IG"/>
    <property type="match status" value="3"/>
</dbReference>
<dbReference type="SMART" id="SM00408">
    <property type="entry name" value="IGc2"/>
    <property type="match status" value="3"/>
</dbReference>
<dbReference type="SUPFAM" id="SSF48726">
    <property type="entry name" value="Immunoglobulin"/>
    <property type="match status" value="3"/>
</dbReference>
<dbReference type="PROSITE" id="PS50835">
    <property type="entry name" value="IG_LIKE"/>
    <property type="match status" value="3"/>
</dbReference>
<feature type="signal peptide" evidence="2">
    <location>
        <begin position="1"/>
        <end position="18"/>
    </location>
</feature>
<feature type="chain" id="PRO_0000015464" description="Interleukin-1-binding protein">
    <location>
        <begin position="19"/>
        <end position="326"/>
    </location>
</feature>
<feature type="domain" description="Ig-like C2-type 1">
    <location>
        <begin position="24"/>
        <end position="115"/>
    </location>
</feature>
<feature type="domain" description="Ig-like C2-type 2">
    <location>
        <begin position="122"/>
        <end position="208"/>
    </location>
</feature>
<feature type="domain" description="Ig-like C2-type 3">
    <location>
        <begin position="221"/>
        <end position="322"/>
    </location>
</feature>
<feature type="glycosylation site" description="N-linked (GlcNAc...) asparagine; by host" evidence="2">
    <location>
        <position position="80"/>
    </location>
</feature>
<feature type="glycosylation site" description="N-linked (GlcNAc...) asparagine; by host" evidence="2">
    <location>
        <position position="103"/>
    </location>
</feature>
<feature type="glycosylation site" description="N-linked (GlcNAc...) asparagine; by host" evidence="2">
    <location>
        <position position="113"/>
    </location>
</feature>
<feature type="glycosylation site" description="N-linked (GlcNAc...) asparagine; by host" evidence="2">
    <location>
        <position position="237"/>
    </location>
</feature>
<feature type="disulfide bond" evidence="3">
    <location>
        <begin position="48"/>
        <end position="99"/>
    </location>
</feature>
<feature type="disulfide bond" evidence="3">
    <location>
        <begin position="143"/>
        <end position="194"/>
    </location>
</feature>
<feature type="disulfide bond" evidence="3">
    <location>
        <begin position="242"/>
        <end position="309"/>
    </location>
</feature>
<organismHost>
    <name type="scientific">Bos taurus</name>
    <name type="common">Bovine</name>
    <dbReference type="NCBI Taxonomy" id="9913"/>
</organismHost>
<organismHost>
    <name type="scientific">Felis catus</name>
    <name type="common">Cat</name>
    <name type="synonym">Felis silvestris catus</name>
    <dbReference type="NCBI Taxonomy" id="9685"/>
</organismHost>
<organismHost>
    <name type="scientific">Homo sapiens</name>
    <name type="common">Human</name>
    <dbReference type="NCBI Taxonomy" id="9606"/>
</organismHost>
<organismHost>
    <name type="scientific">Loxodonta africana</name>
    <name type="common">African elephant</name>
    <dbReference type="NCBI Taxonomy" id="9785"/>
</organismHost>
<organismHost>
    <name type="scientific">Microtus agrestis</name>
    <name type="common">Short-tailed field vole</name>
    <dbReference type="NCBI Taxonomy" id="29092"/>
</organismHost>
<organismHost>
    <name type="scientific">Mus musculus</name>
    <name type="common">Mouse</name>
    <dbReference type="NCBI Taxonomy" id="10090"/>
</organismHost>
<organismHost>
    <name type="scientific">Myodes glareolus</name>
    <name type="common">Bank vole</name>
    <name type="synonym">Clethrionomys glareolus</name>
    <dbReference type="NCBI Taxonomy" id="447135"/>
</organismHost>
<organism>
    <name type="scientific">Cowpox virus (strain Brighton Red)</name>
    <name type="common">CPV</name>
    <dbReference type="NCBI Taxonomy" id="265872"/>
    <lineage>
        <taxon>Viruses</taxon>
        <taxon>Varidnaviria</taxon>
        <taxon>Bamfordvirae</taxon>
        <taxon>Nucleocytoviricota</taxon>
        <taxon>Pokkesviricetes</taxon>
        <taxon>Chitovirales</taxon>
        <taxon>Poxviridae</taxon>
        <taxon>Chordopoxvirinae</taxon>
        <taxon>Orthopoxvirus</taxon>
        <taxon>Cowpox virus</taxon>
    </lineage>
</organism>
<sequence length="326" mass="36790">MSIPPVIFLPIFFYSSFVQAFNAPECIDKGQYFASFMELENEPVILPCPQINTISSGYNILDILWEKRGADNDRIIPIDNGSNMLILNPTQSDSGIYICITKNETYCDMMSLNLTIVSVSESNIDLISYTQIVNERTTGEMVCPNINAFIASNVNADIIWSGHRRLRNKRLRQRTPGIITIEDVRKNDAGYYTCVLKYTYGDKTYDVTRIVKLEVRDRMIPPTMQLPDGVVTSIGSNLTIACRVSLRPPTTDADVFWISNGMYYEEDDEDGDGRISVANKIYTTDKRRVITSRLKINPVKEEDATTFTCMAFTIPSISKTVTISIT</sequence>
<reference key="1">
    <citation type="journal article" date="1992" name="Cell">
        <title>Vaccinia and cowpox viruses encode a novel secreted interleukin-1-binding protein.</title>
        <authorList>
            <person name="Spriggs M.K."/>
            <person name="Hruby D.E."/>
            <person name="Maliszewski C.R."/>
            <person name="Pickup D.J."/>
            <person name="Sims J.E."/>
            <person name="Buller R.M.L."/>
            <person name="Vanslyke J."/>
        </authorList>
    </citation>
    <scope>NUCLEOTIDE SEQUENCE [GENOMIC DNA]</scope>
</reference>
<reference key="2">
    <citation type="submission" date="2003-05" db="EMBL/GenBank/DDBJ databases">
        <authorList>
            <person name="Dietrich F.S."/>
            <person name="Ray C.A."/>
            <person name="Sharma D.A."/>
            <person name="Allen A."/>
            <person name="Pickup D.J."/>
        </authorList>
    </citation>
    <scope>NUCLEOTIDE SEQUENCE [LARGE SCALE GENOMIC DNA]</scope>
</reference>
<accession>Q04523</accession>
<accession>Q77DR6</accession>
<comment type="function">
    <text evidence="1">May reduce the host inflammatory response by interacting with inteleukin-1 beta (Il1b) and thus decreasing the association between IL1B and its cellular receptor.</text>
</comment>
<comment type="subunit">
    <text evidence="1">Interacts with mouse Il1b.</text>
</comment>
<comment type="subcellular location">
    <subcellularLocation>
        <location evidence="1">Secreted</location>
    </subcellularLocation>
</comment>
<comment type="similarity">
    <text evidence="4">Belongs to the interleukin-1 receptor family.</text>
</comment>
<proteinExistence type="inferred from homology"/>
<evidence type="ECO:0000250" key="1">
    <source>
        <dbReference type="UniProtKB" id="P25212"/>
    </source>
</evidence>
<evidence type="ECO:0000255" key="2"/>
<evidence type="ECO:0000255" key="3">
    <source>
        <dbReference type="PROSITE-ProRule" id="PRU00114"/>
    </source>
</evidence>
<evidence type="ECO:0000305" key="4"/>